<feature type="chain" id="PRO_0000303679" description="Tyrosine--tRNA ligase">
    <location>
        <begin position="1"/>
        <end position="372"/>
    </location>
</feature>
<feature type="short sequence motif" description="'KMSKS' region">
    <location>
        <begin position="246"/>
        <end position="250"/>
    </location>
</feature>
<feature type="binding site" evidence="1">
    <location>
        <position position="37"/>
    </location>
    <ligand>
        <name>L-tyrosine</name>
        <dbReference type="ChEBI" id="CHEBI:58315"/>
    </ligand>
</feature>
<feature type="binding site" evidence="1">
    <location>
        <position position="169"/>
    </location>
    <ligand>
        <name>L-tyrosine</name>
        <dbReference type="ChEBI" id="CHEBI:58315"/>
    </ligand>
</feature>
<feature type="binding site" evidence="1">
    <location>
        <position position="173"/>
    </location>
    <ligand>
        <name>L-tyrosine</name>
        <dbReference type="ChEBI" id="CHEBI:58315"/>
    </ligand>
</feature>
<feature type="binding site" evidence="1">
    <location>
        <position position="176"/>
    </location>
    <ligand>
        <name>L-tyrosine</name>
        <dbReference type="ChEBI" id="CHEBI:58315"/>
    </ligand>
</feature>
<feature type="binding site" evidence="1">
    <location>
        <position position="191"/>
    </location>
    <ligand>
        <name>L-tyrosine</name>
        <dbReference type="ChEBI" id="CHEBI:58315"/>
    </ligand>
</feature>
<feature type="binding site" evidence="1">
    <location>
        <position position="249"/>
    </location>
    <ligand>
        <name>ATP</name>
        <dbReference type="ChEBI" id="CHEBI:30616"/>
    </ligand>
</feature>
<sequence>MDVESRLSLILRYPAEEVITVEELKEILQAGYKLNHYIGFEISGFIHIGTGVVSMSKVVDLQKAGVRTQILLADIHSWLNNKLGGDLETIRRVAVTYYVETFKKIIEVLGGDPDGTRFVLGSDLYHHNDEYWLLLMDITRHLTLSQVRHSLTILGRKMGESIPLAYLVYPPLQVADVFALGAHIPHGGIDQRRAHILAREVAHKIRFYPLEVDGKRVKPVALHHRLLPALNISAKPASKEELSELKMSKSIPQSAIFVHDSPEEIKQKIAKAYCPPREVEYNPVLELLRVSAFREERKTPFVIRRPAQYGGDVEVWSYQELEGLYREGKIHPADLKNAAAEALAGLLEPVYKFFQGPGAKLLEEMKNITITR</sequence>
<name>SYY_PYRAR</name>
<organism>
    <name type="scientific">Pyrobaculum arsenaticum (strain DSM 13514 / JCM 11321 / PZ6)</name>
    <dbReference type="NCBI Taxonomy" id="340102"/>
    <lineage>
        <taxon>Archaea</taxon>
        <taxon>Thermoproteota</taxon>
        <taxon>Thermoprotei</taxon>
        <taxon>Thermoproteales</taxon>
        <taxon>Thermoproteaceae</taxon>
        <taxon>Pyrobaculum</taxon>
    </lineage>
</organism>
<keyword id="KW-0030">Aminoacyl-tRNA synthetase</keyword>
<keyword id="KW-0067">ATP-binding</keyword>
<keyword id="KW-0963">Cytoplasm</keyword>
<keyword id="KW-0436">Ligase</keyword>
<keyword id="KW-0547">Nucleotide-binding</keyword>
<keyword id="KW-0648">Protein biosynthesis</keyword>
<proteinExistence type="inferred from homology"/>
<accession>A4WN67</accession>
<dbReference type="EC" id="6.1.1.1" evidence="1"/>
<dbReference type="EMBL" id="CP000660">
    <property type="protein sequence ID" value="ABP51834.1"/>
    <property type="molecule type" value="Genomic_DNA"/>
</dbReference>
<dbReference type="SMR" id="A4WN67"/>
<dbReference type="STRING" id="340102.Pars_2290"/>
<dbReference type="KEGG" id="pas:Pars_2290"/>
<dbReference type="HOGENOM" id="CLU_035267_1_1_2"/>
<dbReference type="OrthoDB" id="8389at2157"/>
<dbReference type="PhylomeDB" id="A4WN67"/>
<dbReference type="Proteomes" id="UP000001567">
    <property type="component" value="Chromosome"/>
</dbReference>
<dbReference type="GO" id="GO:0005737">
    <property type="term" value="C:cytoplasm"/>
    <property type="evidence" value="ECO:0007669"/>
    <property type="project" value="UniProtKB-SubCell"/>
</dbReference>
<dbReference type="GO" id="GO:0005524">
    <property type="term" value="F:ATP binding"/>
    <property type="evidence" value="ECO:0007669"/>
    <property type="project" value="UniProtKB-UniRule"/>
</dbReference>
<dbReference type="GO" id="GO:0004831">
    <property type="term" value="F:tyrosine-tRNA ligase activity"/>
    <property type="evidence" value="ECO:0007669"/>
    <property type="project" value="UniProtKB-UniRule"/>
</dbReference>
<dbReference type="GO" id="GO:0006437">
    <property type="term" value="P:tyrosyl-tRNA aminoacylation"/>
    <property type="evidence" value="ECO:0007669"/>
    <property type="project" value="UniProtKB-UniRule"/>
</dbReference>
<dbReference type="Gene3D" id="3.40.50.620">
    <property type="entry name" value="HUPs"/>
    <property type="match status" value="2"/>
</dbReference>
<dbReference type="HAMAP" id="MF_02009">
    <property type="entry name" value="Tyr_tRNA_synth_type4"/>
    <property type="match status" value="1"/>
</dbReference>
<dbReference type="InterPro" id="IPR002305">
    <property type="entry name" value="aa-tRNA-synth_Ic"/>
</dbReference>
<dbReference type="InterPro" id="IPR014729">
    <property type="entry name" value="Rossmann-like_a/b/a_fold"/>
</dbReference>
<dbReference type="InterPro" id="IPR023678">
    <property type="entry name" value="Tyr-tRNA-ligase_4"/>
</dbReference>
<dbReference type="InterPro" id="IPR023617">
    <property type="entry name" value="Tyr-tRNA-ligase_arc/euk-type"/>
</dbReference>
<dbReference type="InterPro" id="IPR050489">
    <property type="entry name" value="Tyr-tRNA_synthase"/>
</dbReference>
<dbReference type="NCBIfam" id="NF006330">
    <property type="entry name" value="PRK08560.1"/>
    <property type="match status" value="1"/>
</dbReference>
<dbReference type="PANTHER" id="PTHR46264:SF4">
    <property type="entry name" value="TYROSINE--TRNA LIGASE, CYTOPLASMIC"/>
    <property type="match status" value="1"/>
</dbReference>
<dbReference type="PANTHER" id="PTHR46264">
    <property type="entry name" value="TYROSINE-TRNA LIGASE"/>
    <property type="match status" value="1"/>
</dbReference>
<dbReference type="Pfam" id="PF00579">
    <property type="entry name" value="tRNA-synt_1b"/>
    <property type="match status" value="1"/>
</dbReference>
<dbReference type="PIRSF" id="PIRSF006588">
    <property type="entry name" value="TyrRS_arch_euk"/>
    <property type="match status" value="1"/>
</dbReference>
<dbReference type="SUPFAM" id="SSF52374">
    <property type="entry name" value="Nucleotidylyl transferase"/>
    <property type="match status" value="1"/>
</dbReference>
<gene>
    <name evidence="1" type="primary">tyrS</name>
    <name type="ordered locus">Pars_2290</name>
</gene>
<evidence type="ECO:0000255" key="1">
    <source>
        <dbReference type="HAMAP-Rule" id="MF_02009"/>
    </source>
</evidence>
<comment type="function">
    <text evidence="1">Catalyzes the attachment of tyrosine to tRNA(Tyr) in a two-step reaction: tyrosine is first activated by ATP to form Tyr-AMP and then transferred to the acceptor end of tRNA(Tyr).</text>
</comment>
<comment type="catalytic activity">
    <reaction evidence="1">
        <text>tRNA(Tyr) + L-tyrosine + ATP = L-tyrosyl-tRNA(Tyr) + AMP + diphosphate + H(+)</text>
        <dbReference type="Rhea" id="RHEA:10220"/>
        <dbReference type="Rhea" id="RHEA-COMP:9706"/>
        <dbReference type="Rhea" id="RHEA-COMP:9707"/>
        <dbReference type="ChEBI" id="CHEBI:15378"/>
        <dbReference type="ChEBI" id="CHEBI:30616"/>
        <dbReference type="ChEBI" id="CHEBI:33019"/>
        <dbReference type="ChEBI" id="CHEBI:58315"/>
        <dbReference type="ChEBI" id="CHEBI:78442"/>
        <dbReference type="ChEBI" id="CHEBI:78536"/>
        <dbReference type="ChEBI" id="CHEBI:456215"/>
        <dbReference type="EC" id="6.1.1.1"/>
    </reaction>
</comment>
<comment type="subunit">
    <text evidence="1">Homodimer.</text>
</comment>
<comment type="subcellular location">
    <subcellularLocation>
        <location evidence="1">Cytoplasm</location>
    </subcellularLocation>
</comment>
<comment type="similarity">
    <text evidence="1">Belongs to the class-I aminoacyl-tRNA synthetase family. TyrS type 4 subfamily.</text>
</comment>
<reference key="1">
    <citation type="submission" date="2007-04" db="EMBL/GenBank/DDBJ databases">
        <title>Complete sequence of Pyrobaculum arsenaticum DSM 13514.</title>
        <authorList>
            <consortium name="US DOE Joint Genome Institute"/>
            <person name="Copeland A."/>
            <person name="Lucas S."/>
            <person name="Lapidus A."/>
            <person name="Barry K."/>
            <person name="Glavina del Rio T."/>
            <person name="Dalin E."/>
            <person name="Tice H."/>
            <person name="Pitluck S."/>
            <person name="Chain P."/>
            <person name="Malfatti S."/>
            <person name="Shin M."/>
            <person name="Vergez L."/>
            <person name="Schmutz J."/>
            <person name="Larimer F."/>
            <person name="Land M."/>
            <person name="Hauser L."/>
            <person name="Kyrpides N."/>
            <person name="Mikhailova N."/>
            <person name="Cozen A.E."/>
            <person name="Fitz-Gibbon S.T."/>
            <person name="House C.H."/>
            <person name="Saltikov C."/>
            <person name="Lowe T.M."/>
            <person name="Richardson P."/>
        </authorList>
    </citation>
    <scope>NUCLEOTIDE SEQUENCE [LARGE SCALE GENOMIC DNA]</scope>
    <source>
        <strain>ATCC 700994 / DSM 13514 / JCM 11321 / PZ6</strain>
    </source>
</reference>
<protein>
    <recommendedName>
        <fullName evidence="1">Tyrosine--tRNA ligase</fullName>
        <ecNumber evidence="1">6.1.1.1</ecNumber>
    </recommendedName>
    <alternativeName>
        <fullName evidence="1">Tyrosyl-tRNA synthetase</fullName>
        <shortName evidence="1">TyrRS</shortName>
    </alternativeName>
</protein>